<feature type="chain" id="PRO_0000461769" description="Zinc-finger protein TK0143">
    <location>
        <begin position="1"/>
        <end position="47"/>
    </location>
</feature>
<feature type="zinc finger region" description="C2H2-type" evidence="1">
    <location>
        <begin position="18"/>
        <end position="41"/>
    </location>
</feature>
<feature type="binding site" evidence="5">
    <location>
        <position position="20"/>
    </location>
    <ligand>
        <name>Zn(2+)</name>
        <dbReference type="ChEBI" id="CHEBI:29105"/>
    </ligand>
</feature>
<feature type="binding site" evidence="5">
    <location>
        <position position="23"/>
    </location>
    <ligand>
        <name>Zn(2+)</name>
        <dbReference type="ChEBI" id="CHEBI:29105"/>
    </ligand>
</feature>
<feature type="binding site" evidence="5">
    <location>
        <position position="36"/>
    </location>
    <ligand>
        <name>Zn(2+)</name>
        <dbReference type="ChEBI" id="CHEBI:29105"/>
    </ligand>
</feature>
<feature type="binding site" evidence="5">
    <location>
        <position position="41"/>
    </location>
    <ligand>
        <name>Zn(2+)</name>
        <dbReference type="ChEBI" id="CHEBI:29105"/>
    </ligand>
</feature>
<comment type="cofactor">
    <cofactor evidence="5">
        <name>Zn(2+)</name>
        <dbReference type="ChEBI" id="CHEBI:29105"/>
    </cofactor>
    <text evidence="5">Binds 1 zinc ion per subunit.</text>
</comment>
<comment type="subunit">
    <text evidence="2">Crystallized in association with 70S ribosomes.</text>
</comment>
<accession>Q5JFH3</accession>
<sequence>MAVLKAIKIEDRDGEILFRCPRCGMVFRSAKAYTRHVNKAHGHLFRK</sequence>
<gene>
    <name evidence="4" type="ordered locus">TK0143</name>
</gene>
<proteinExistence type="evidence at protein level"/>
<reference evidence="4" key="1">
    <citation type="journal article" date="2005" name="Genome Res.">
        <title>Complete genome sequence of the hyperthermophilic archaeon Thermococcus kodakaraensis KOD1 and comparison with Pyrococcus genomes.</title>
        <authorList>
            <person name="Fukui T."/>
            <person name="Atomi H."/>
            <person name="Kanai T."/>
            <person name="Matsumi R."/>
            <person name="Fujiwara S."/>
            <person name="Imanaka T."/>
        </authorList>
    </citation>
    <scope>NUCLEOTIDE SEQUENCE [LARGE SCALE GENOMIC DNA]</scope>
    <source>
        <strain>ATCC BAA-918 / JCM 12380 / KOD1</strain>
    </source>
</reference>
<reference evidence="5" key="2">
    <citation type="journal article" date="2020" name="Nature">
        <title>Dynamic RNA acetylation revealed by quantitative cross-evolutionary mapping.</title>
        <authorList>
            <person name="Sas-Chen A."/>
            <person name="Thomas J.M."/>
            <person name="Matzov D."/>
            <person name="Taoka M."/>
            <person name="Nance K.D."/>
            <person name="Nir R."/>
            <person name="Bryson K.M."/>
            <person name="Shachar R."/>
            <person name="Liman G.L.S."/>
            <person name="Burkhart B.W."/>
            <person name="Gamage S.T."/>
            <person name="Nobe Y."/>
            <person name="Briney C.A."/>
            <person name="Levy M.J."/>
            <person name="Fuchs R.T."/>
            <person name="Robb G.B."/>
            <person name="Hartmann J."/>
            <person name="Sharma S."/>
            <person name="Lin Q."/>
            <person name="Florens L."/>
            <person name="Washburn M.P."/>
            <person name="Isobe T."/>
            <person name="Santangelo T.J."/>
            <person name="Shalev-Benami M."/>
            <person name="Meier J.L."/>
            <person name="Schwartz S."/>
        </authorList>
    </citation>
    <scope>STRUCTURE BY ELECTRON MICROSCOPY (2.65 ANGSTROMS)</scope>
    <scope>COFACTOR</scope>
    <source>
        <strain>ATCC BAA-918 / TS559</strain>
    </source>
</reference>
<organism>
    <name type="scientific">Thermococcus kodakarensis (strain ATCC BAA-918 / JCM 12380 / KOD1)</name>
    <name type="common">Pyrococcus kodakaraensis (strain KOD1)</name>
    <dbReference type="NCBI Taxonomy" id="69014"/>
    <lineage>
        <taxon>Archaea</taxon>
        <taxon>Methanobacteriati</taxon>
        <taxon>Methanobacteriota</taxon>
        <taxon>Thermococci</taxon>
        <taxon>Thermococcales</taxon>
        <taxon>Thermococcaceae</taxon>
        <taxon>Thermococcus</taxon>
    </lineage>
</organism>
<evidence type="ECO:0000255" key="1">
    <source>
        <dbReference type="PROSITE-ProRule" id="PRU00042"/>
    </source>
</evidence>
<evidence type="ECO:0000269" key="2">
    <source>
    </source>
</evidence>
<evidence type="ECO:0000305" key="3"/>
<evidence type="ECO:0000312" key="4">
    <source>
        <dbReference type="EMBL" id="BAD84332.1"/>
    </source>
</evidence>
<evidence type="ECO:0007744" key="5">
    <source>
        <dbReference type="PDB" id="6SKG"/>
    </source>
</evidence>
<name>Z143_THEKO</name>
<protein>
    <recommendedName>
        <fullName evidence="3">Zinc-finger protein TK0143</fullName>
    </recommendedName>
</protein>
<dbReference type="EMBL" id="AP006878">
    <property type="protein sequence ID" value="BAD84332.1"/>
    <property type="molecule type" value="Genomic_DNA"/>
</dbReference>
<dbReference type="RefSeq" id="WP_011249098.1">
    <property type="nucleotide sequence ID" value="NC_006624.1"/>
</dbReference>
<dbReference type="PDB" id="6SKG">
    <property type="method" value="EM"/>
    <property type="resolution" value="2.65 A"/>
    <property type="chains" value="Bo=1-47"/>
</dbReference>
<dbReference type="PDBsum" id="6SKG"/>
<dbReference type="EMDB" id="EMD-10224"/>
<dbReference type="STRING" id="69014.TK0143"/>
<dbReference type="EnsemblBacteria" id="BAD84332">
    <property type="protein sequence ID" value="BAD84332"/>
    <property type="gene ID" value="TK0143"/>
</dbReference>
<dbReference type="GeneID" id="78446648"/>
<dbReference type="KEGG" id="tko:TK0143"/>
<dbReference type="PATRIC" id="fig|69014.16.peg.143"/>
<dbReference type="eggNOG" id="arCOG03461">
    <property type="taxonomic scope" value="Archaea"/>
</dbReference>
<dbReference type="HOGENOM" id="CLU_203610_0_0_2"/>
<dbReference type="InParanoid" id="Q5JFH3"/>
<dbReference type="OrthoDB" id="63170at2157"/>
<dbReference type="Proteomes" id="UP000000536">
    <property type="component" value="Chromosome"/>
</dbReference>
<dbReference type="GO" id="GO:0008270">
    <property type="term" value="F:zinc ion binding"/>
    <property type="evidence" value="ECO:0007669"/>
    <property type="project" value="UniProtKB-KW"/>
</dbReference>
<dbReference type="Gene3D" id="3.30.160.60">
    <property type="entry name" value="Classic Zinc Finger"/>
    <property type="match status" value="1"/>
</dbReference>
<dbReference type="InterPro" id="IPR036236">
    <property type="entry name" value="Znf_C2H2_sf"/>
</dbReference>
<dbReference type="InterPro" id="IPR013087">
    <property type="entry name" value="Znf_C2H2_type"/>
</dbReference>
<dbReference type="Pfam" id="PF00096">
    <property type="entry name" value="zf-C2H2"/>
    <property type="match status" value="1"/>
</dbReference>
<dbReference type="SMART" id="SM00355">
    <property type="entry name" value="ZnF_C2H2"/>
    <property type="match status" value="1"/>
</dbReference>
<dbReference type="SUPFAM" id="SSF57667">
    <property type="entry name" value="beta-beta-alpha zinc fingers"/>
    <property type="match status" value="1"/>
</dbReference>
<dbReference type="PROSITE" id="PS00028">
    <property type="entry name" value="ZINC_FINGER_C2H2_1"/>
    <property type="match status" value="1"/>
</dbReference>
<dbReference type="PROSITE" id="PS50157">
    <property type="entry name" value="ZINC_FINGER_C2H2_2"/>
    <property type="match status" value="1"/>
</dbReference>
<keyword id="KW-0002">3D-structure</keyword>
<keyword id="KW-0479">Metal-binding</keyword>
<keyword id="KW-1185">Reference proteome</keyword>
<keyword id="KW-0862">Zinc</keyword>
<keyword id="KW-0863">Zinc-finger</keyword>